<name>PEPB_MONDO</name>
<feature type="signal peptide" evidence="3">
    <location>
        <begin position="1"/>
        <end position="16"/>
    </location>
</feature>
<feature type="propeptide" id="PRO_0000026061" description="Activation peptide" evidence="1">
    <location>
        <begin position="17"/>
        <end position="60"/>
    </location>
</feature>
<feature type="chain" id="PRO_0000026062" description="Pepsin B">
    <location>
        <begin position="61"/>
        <end position="391"/>
    </location>
</feature>
<feature type="domain" description="Peptidase A1" evidence="4">
    <location>
        <begin position="75"/>
        <end position="388"/>
    </location>
</feature>
<feature type="active site" evidence="5">
    <location>
        <position position="93"/>
    </location>
</feature>
<feature type="active site" evidence="5">
    <location>
        <position position="279"/>
    </location>
</feature>
<feature type="disulfide bond" evidence="1">
    <location>
        <begin position="106"/>
        <end position="111"/>
    </location>
</feature>
<feature type="disulfide bond" evidence="1">
    <location>
        <begin position="270"/>
        <end position="274"/>
    </location>
</feature>
<feature type="disulfide bond" evidence="1">
    <location>
        <begin position="313"/>
        <end position="346"/>
    </location>
</feature>
<dbReference type="EC" id="3.4.23.2" evidence="2"/>
<dbReference type="EMBL" id="AB188678">
    <property type="protein sequence ID" value="BAD36918.1"/>
    <property type="molecule type" value="mRNA"/>
</dbReference>
<dbReference type="RefSeq" id="NP_001028152.1">
    <property type="nucleotide sequence ID" value="NM_001032980.1"/>
</dbReference>
<dbReference type="SMR" id="Q689Z7"/>
<dbReference type="STRING" id="13616.ENSMODP00000001655"/>
<dbReference type="MEROPS" id="A01.002"/>
<dbReference type="GeneID" id="554184"/>
<dbReference type="KEGG" id="mdo:554184"/>
<dbReference type="CTD" id="5225"/>
<dbReference type="eggNOG" id="KOG1339">
    <property type="taxonomic scope" value="Eukaryota"/>
</dbReference>
<dbReference type="InParanoid" id="Q689Z7"/>
<dbReference type="OrthoDB" id="771136at2759"/>
<dbReference type="Proteomes" id="UP000002280">
    <property type="component" value="Unplaced"/>
</dbReference>
<dbReference type="GO" id="GO:0005576">
    <property type="term" value="C:extracellular region"/>
    <property type="evidence" value="ECO:0007669"/>
    <property type="project" value="UniProtKB-SubCell"/>
</dbReference>
<dbReference type="GO" id="GO:0004190">
    <property type="term" value="F:aspartic-type endopeptidase activity"/>
    <property type="evidence" value="ECO:0000318"/>
    <property type="project" value="GO_Central"/>
</dbReference>
<dbReference type="GO" id="GO:0007586">
    <property type="term" value="P:digestion"/>
    <property type="evidence" value="ECO:0007669"/>
    <property type="project" value="UniProtKB-KW"/>
</dbReference>
<dbReference type="GO" id="GO:0006508">
    <property type="term" value="P:proteolysis"/>
    <property type="evidence" value="ECO:0000318"/>
    <property type="project" value="GO_Central"/>
</dbReference>
<dbReference type="FunFam" id="2.40.70.10:FF:000419">
    <property type="match status" value="1"/>
</dbReference>
<dbReference type="FunFam" id="2.40.70.10:FF:000173">
    <property type="entry name" value="Uncharacterized protein"/>
    <property type="match status" value="1"/>
</dbReference>
<dbReference type="Gene3D" id="6.10.140.60">
    <property type="match status" value="1"/>
</dbReference>
<dbReference type="Gene3D" id="2.40.70.10">
    <property type="entry name" value="Acid Proteases"/>
    <property type="match status" value="2"/>
</dbReference>
<dbReference type="InterPro" id="IPR001461">
    <property type="entry name" value="Aspartic_peptidase_A1"/>
</dbReference>
<dbReference type="InterPro" id="IPR001969">
    <property type="entry name" value="Aspartic_peptidase_AS"/>
</dbReference>
<dbReference type="InterPro" id="IPR012848">
    <property type="entry name" value="Aspartic_peptidase_N"/>
</dbReference>
<dbReference type="InterPro" id="IPR033121">
    <property type="entry name" value="PEPTIDASE_A1"/>
</dbReference>
<dbReference type="InterPro" id="IPR021109">
    <property type="entry name" value="Peptidase_aspartic_dom_sf"/>
</dbReference>
<dbReference type="PANTHER" id="PTHR47966">
    <property type="entry name" value="BETA-SITE APP-CLEAVING ENZYME, ISOFORM A-RELATED"/>
    <property type="match status" value="1"/>
</dbReference>
<dbReference type="PANTHER" id="PTHR47966:SF70">
    <property type="entry name" value="PEPTIDASE A1 DOMAIN-CONTAINING PROTEIN"/>
    <property type="match status" value="1"/>
</dbReference>
<dbReference type="Pfam" id="PF07966">
    <property type="entry name" value="A1_Propeptide"/>
    <property type="match status" value="1"/>
</dbReference>
<dbReference type="Pfam" id="PF00026">
    <property type="entry name" value="Asp"/>
    <property type="match status" value="1"/>
</dbReference>
<dbReference type="PRINTS" id="PR00792">
    <property type="entry name" value="PEPSIN"/>
</dbReference>
<dbReference type="SUPFAM" id="SSF50630">
    <property type="entry name" value="Acid proteases"/>
    <property type="match status" value="1"/>
</dbReference>
<dbReference type="PROSITE" id="PS00141">
    <property type="entry name" value="ASP_PROTEASE"/>
    <property type="match status" value="1"/>
</dbReference>
<dbReference type="PROSITE" id="PS51767">
    <property type="entry name" value="PEPTIDASE_A1"/>
    <property type="match status" value="1"/>
</dbReference>
<proteinExistence type="evidence at transcript level"/>
<gene>
    <name evidence="6" type="primary">PGB</name>
</gene>
<keyword id="KW-0064">Aspartyl protease</keyword>
<keyword id="KW-0222">Digestion</keyword>
<keyword id="KW-1015">Disulfide bond</keyword>
<keyword id="KW-0378">Hydrolase</keyword>
<keyword id="KW-0645">Protease</keyword>
<keyword id="KW-1185">Reference proteome</keyword>
<keyword id="KW-0964">Secreted</keyword>
<keyword id="KW-0732">Signal</keyword>
<keyword id="KW-0865">Zymogen</keyword>
<comment type="function">
    <text evidence="2">Hydrolyzes various peptides including beta-endorphin, insulin B chain, dynorphin A, and neurokinin A, with high specificity for the cleavage of the Phe-Xaa bonds.</text>
</comment>
<comment type="catalytic activity">
    <reaction evidence="2">
        <text>Degradation of gelatin, little activity on hemoglobin. Specificity on B chain of insulin more restricted than that of pepsin A. Does not cleave 1-Phe-|-Val-2, 4-Gln-|-His-5 or 23-Gly-|-Phe-24.</text>
        <dbReference type="EC" id="3.4.23.2"/>
    </reaction>
</comment>
<comment type="subcellular location">
    <subcellularLocation>
        <location>Secreted</location>
    </subcellularLocation>
</comment>
<comment type="similarity">
    <text evidence="6">Belongs to the peptidase A1 family.</text>
</comment>
<evidence type="ECO:0000250" key="1"/>
<evidence type="ECO:0000250" key="2">
    <source>
        <dbReference type="UniProtKB" id="Q8SQ41"/>
    </source>
</evidence>
<evidence type="ECO:0000255" key="3"/>
<evidence type="ECO:0000255" key="4">
    <source>
        <dbReference type="PROSITE-ProRule" id="PRU01103"/>
    </source>
</evidence>
<evidence type="ECO:0000255" key="5">
    <source>
        <dbReference type="PROSITE-ProRule" id="PRU10094"/>
    </source>
</evidence>
<evidence type="ECO:0000305" key="6"/>
<accession>Q689Z7</accession>
<reference key="1">
    <citation type="submission" date="2004-08" db="EMBL/GenBank/DDBJ databases">
        <title>The monophyly of rodentia inferred from biochemical analyses of gastric aspartic proteinases and molecular phylogenetic analyses of pepsinogen-C cDNA sequences.</title>
        <authorList>
            <person name="Narita Y."/>
            <person name="Oda S."/>
            <person name="Kageyama T."/>
        </authorList>
    </citation>
    <scope>NUCLEOTIDE SEQUENCE [MRNA]</scope>
</reference>
<protein>
    <recommendedName>
        <fullName>Pepsin B</fullName>
        <ecNumber evidence="2">3.4.23.2</ecNumber>
    </recommendedName>
</protein>
<sequence length="391" mass="43281">MKCLILALICLQLSEGLVVRQILHKGKSIRERMEENGVLEDFLRYNKKADPAAKFLFNKDAVAYEPITNYLDSFYFGEISIGTPPQNFLVLFDTGSSNLWVPSTYCQSQACSNHNRFSPSQSSTFTNGGQTYTLSYGSGSLTVVLGYDTVTVQNIVVSNQEFGLSESEPTSPFYYSDFDGILGMAYPAMAVGNSPTVMQGMLQQGQLSEPIFSFYFSRQPTHQYGGELILGGVDPQLYSGQITWTPVTQEVYWQIGIEEFAIGNQATGWCSQGCQAIVDTGTFLLAVPQQYMSAFLQATGAQQAQNGDFMVNCNYIQDMPTITFVINGSQFPLPPSAYVFNNNGYCRLGIEATYLPSPNGQPLWILGDVFLKEYYSVYDMANNRVGFAYSA</sequence>
<organism>
    <name type="scientific">Monodelphis domestica</name>
    <name type="common">Gray short-tailed opossum</name>
    <dbReference type="NCBI Taxonomy" id="13616"/>
    <lineage>
        <taxon>Eukaryota</taxon>
        <taxon>Metazoa</taxon>
        <taxon>Chordata</taxon>
        <taxon>Craniata</taxon>
        <taxon>Vertebrata</taxon>
        <taxon>Euteleostomi</taxon>
        <taxon>Mammalia</taxon>
        <taxon>Metatheria</taxon>
        <taxon>Didelphimorphia</taxon>
        <taxon>Didelphidae</taxon>
        <taxon>Monodelphis</taxon>
    </lineage>
</organism>